<name>ZN181_HUMAN</name>
<proteinExistence type="evidence at protein level"/>
<reference key="1">
    <citation type="journal article" date="2004" name="Nature">
        <title>The DNA sequence and biology of human chromosome 19.</title>
        <authorList>
            <person name="Grimwood J."/>
            <person name="Gordon L.A."/>
            <person name="Olsen A.S."/>
            <person name="Terry A."/>
            <person name="Schmutz J."/>
            <person name="Lamerdin J.E."/>
            <person name="Hellsten U."/>
            <person name="Goodstein D."/>
            <person name="Couronne O."/>
            <person name="Tran-Gyamfi M."/>
            <person name="Aerts A."/>
            <person name="Altherr M."/>
            <person name="Ashworth L."/>
            <person name="Bajorek E."/>
            <person name="Black S."/>
            <person name="Branscomb E."/>
            <person name="Caenepeel S."/>
            <person name="Carrano A.V."/>
            <person name="Caoile C."/>
            <person name="Chan Y.M."/>
            <person name="Christensen M."/>
            <person name="Cleland C.A."/>
            <person name="Copeland A."/>
            <person name="Dalin E."/>
            <person name="Dehal P."/>
            <person name="Denys M."/>
            <person name="Detter J.C."/>
            <person name="Escobar J."/>
            <person name="Flowers D."/>
            <person name="Fotopulos D."/>
            <person name="Garcia C."/>
            <person name="Georgescu A.M."/>
            <person name="Glavina T."/>
            <person name="Gomez M."/>
            <person name="Gonzales E."/>
            <person name="Groza M."/>
            <person name="Hammon N."/>
            <person name="Hawkins T."/>
            <person name="Haydu L."/>
            <person name="Ho I."/>
            <person name="Huang W."/>
            <person name="Israni S."/>
            <person name="Jett J."/>
            <person name="Kadner K."/>
            <person name="Kimball H."/>
            <person name="Kobayashi A."/>
            <person name="Larionov V."/>
            <person name="Leem S.-H."/>
            <person name="Lopez F."/>
            <person name="Lou Y."/>
            <person name="Lowry S."/>
            <person name="Malfatti S."/>
            <person name="Martinez D."/>
            <person name="McCready P.M."/>
            <person name="Medina C."/>
            <person name="Morgan J."/>
            <person name="Nelson K."/>
            <person name="Nolan M."/>
            <person name="Ovcharenko I."/>
            <person name="Pitluck S."/>
            <person name="Pollard M."/>
            <person name="Popkie A.P."/>
            <person name="Predki P."/>
            <person name="Quan G."/>
            <person name="Ramirez L."/>
            <person name="Rash S."/>
            <person name="Retterer J."/>
            <person name="Rodriguez A."/>
            <person name="Rogers S."/>
            <person name="Salamov A."/>
            <person name="Salazar A."/>
            <person name="She X."/>
            <person name="Smith D."/>
            <person name="Slezak T."/>
            <person name="Solovyev V."/>
            <person name="Thayer N."/>
            <person name="Tice H."/>
            <person name="Tsai M."/>
            <person name="Ustaszewska A."/>
            <person name="Vo N."/>
            <person name="Wagner M."/>
            <person name="Wheeler J."/>
            <person name="Wu K."/>
            <person name="Xie G."/>
            <person name="Yang J."/>
            <person name="Dubchak I."/>
            <person name="Furey T.S."/>
            <person name="DeJong P."/>
            <person name="Dickson M."/>
            <person name="Gordon D."/>
            <person name="Eichler E.E."/>
            <person name="Pennacchio L.A."/>
            <person name="Richardson P."/>
            <person name="Stubbs L."/>
            <person name="Rokhsar D.S."/>
            <person name="Myers R.M."/>
            <person name="Rubin E.M."/>
            <person name="Lucas S.M."/>
        </authorList>
    </citation>
    <scope>NUCLEOTIDE SEQUENCE [LARGE SCALE GENOMIC DNA]</scope>
</reference>
<reference key="2">
    <citation type="journal article" date="2004" name="Genome Res.">
        <title>The status, quality, and expansion of the NIH full-length cDNA project: the Mammalian Gene Collection (MGC).</title>
        <authorList>
            <consortium name="The MGC Project Team"/>
        </authorList>
    </citation>
    <scope>NUCLEOTIDE SEQUENCE [LARGE SCALE MRNA] (ISOFORMS 1; 2 AND 3)</scope>
    <source>
        <tissue>Lung</tissue>
        <tissue>Testis</tissue>
    </source>
</reference>
<reference key="3">
    <citation type="journal article" date="2014" name="Nat. Struct. Mol. Biol.">
        <title>Uncovering global SUMOylation signaling networks in a site-specific manner.</title>
        <authorList>
            <person name="Hendriks I.A."/>
            <person name="D'Souza R.C."/>
            <person name="Yang B."/>
            <person name="Verlaan-de Vries M."/>
            <person name="Mann M."/>
            <person name="Vertegaal A.C."/>
        </authorList>
    </citation>
    <scope>SUMOYLATION [LARGE SCALE ANALYSIS] AT LYS-109</scope>
    <scope>IDENTIFICATION BY MASS SPECTROMETRY [LARGE SCALE ANALYSIS]</scope>
</reference>
<reference key="4">
    <citation type="journal article" date="2017" name="Nat. Struct. Mol. Biol.">
        <title>Site-specific mapping of the human SUMO proteome reveals co-modification with phosphorylation.</title>
        <authorList>
            <person name="Hendriks I.A."/>
            <person name="Lyon D."/>
            <person name="Young C."/>
            <person name="Jensen L.J."/>
            <person name="Vertegaal A.C."/>
            <person name="Nielsen M.L."/>
        </authorList>
    </citation>
    <scope>SUMOYLATION [LARGE SCALE ANALYSIS] AT LYS-126</scope>
    <scope>IDENTIFICATION BY MASS SPECTROMETRY [LARGE SCALE ANALYSIS]</scope>
</reference>
<evidence type="ECO:0000255" key="1">
    <source>
        <dbReference type="PROSITE-ProRule" id="PRU00042"/>
    </source>
</evidence>
<evidence type="ECO:0000255" key="2">
    <source>
        <dbReference type="PROSITE-ProRule" id="PRU00119"/>
    </source>
</evidence>
<evidence type="ECO:0000303" key="3">
    <source>
    </source>
</evidence>
<evidence type="ECO:0000305" key="4"/>
<evidence type="ECO:0007744" key="5">
    <source>
    </source>
</evidence>
<evidence type="ECO:0007744" key="6">
    <source>
    </source>
</evidence>
<accession>Q2M3W8</accession>
<accession>B7ZKX3</accession>
<accession>Q49A75</accession>
<organism>
    <name type="scientific">Homo sapiens</name>
    <name type="common">Human</name>
    <dbReference type="NCBI Taxonomy" id="9606"/>
    <lineage>
        <taxon>Eukaryota</taxon>
        <taxon>Metazoa</taxon>
        <taxon>Chordata</taxon>
        <taxon>Craniata</taxon>
        <taxon>Vertebrata</taxon>
        <taxon>Euteleostomi</taxon>
        <taxon>Mammalia</taxon>
        <taxon>Eutheria</taxon>
        <taxon>Euarchontoglires</taxon>
        <taxon>Primates</taxon>
        <taxon>Haplorrhini</taxon>
        <taxon>Catarrhini</taxon>
        <taxon>Hominidae</taxon>
        <taxon>Homo</taxon>
    </lineage>
</organism>
<dbReference type="EMBL" id="AC020910">
    <property type="status" value="NOT_ANNOTATED_CDS"/>
    <property type="molecule type" value="Genomic_DNA"/>
</dbReference>
<dbReference type="EMBL" id="BC043228">
    <property type="protein sequence ID" value="AAH43228.1"/>
    <property type="molecule type" value="mRNA"/>
</dbReference>
<dbReference type="EMBL" id="BC104759">
    <property type="protein sequence ID" value="AAI04760.1"/>
    <property type="molecule type" value="mRNA"/>
</dbReference>
<dbReference type="EMBL" id="BC143442">
    <property type="protein sequence ID" value="AAI43443.1"/>
    <property type="molecule type" value="mRNA"/>
</dbReference>
<dbReference type="CCDS" id="CCDS32990.2">
    <molecule id="Q2M3W8-1"/>
</dbReference>
<dbReference type="CCDS" id="CCDS46043.1">
    <molecule id="Q2M3W8-3"/>
</dbReference>
<dbReference type="RefSeq" id="NP_001025168.2">
    <molecule id="Q2M3W8-1"/>
    <property type="nucleotide sequence ID" value="NM_001029997.4"/>
</dbReference>
<dbReference type="RefSeq" id="NP_001139137.1">
    <molecule id="Q2M3W8-3"/>
    <property type="nucleotide sequence ID" value="NM_001145665.2"/>
</dbReference>
<dbReference type="RefSeq" id="XP_005258906.1">
    <molecule id="Q2M3W8-1"/>
    <property type="nucleotide sequence ID" value="XM_005258849.3"/>
</dbReference>
<dbReference type="RefSeq" id="XP_005258907.1">
    <molecule id="Q2M3W8-3"/>
    <property type="nucleotide sequence ID" value="XM_005258850.3"/>
</dbReference>
<dbReference type="RefSeq" id="XP_006723246.1">
    <molecule id="Q2M3W8-1"/>
    <property type="nucleotide sequence ID" value="XM_006723183.4"/>
</dbReference>
<dbReference type="RefSeq" id="XP_016882228.1">
    <molecule id="Q2M3W8-3"/>
    <property type="nucleotide sequence ID" value="XM_017026739.3"/>
</dbReference>
<dbReference type="SMR" id="Q2M3W8"/>
<dbReference type="BioGRID" id="130866">
    <property type="interactions" value="9"/>
</dbReference>
<dbReference type="FunCoup" id="Q2M3W8">
    <property type="interactions" value="10"/>
</dbReference>
<dbReference type="IntAct" id="Q2M3W8">
    <property type="interactions" value="8"/>
</dbReference>
<dbReference type="STRING" id="9606.ENSP00000420727"/>
<dbReference type="iPTMnet" id="Q2M3W8"/>
<dbReference type="PhosphoSitePlus" id="Q2M3W8"/>
<dbReference type="BioMuta" id="ZNF181"/>
<dbReference type="DMDM" id="91208389"/>
<dbReference type="jPOST" id="Q2M3W8"/>
<dbReference type="MassIVE" id="Q2M3W8"/>
<dbReference type="PaxDb" id="9606-ENSP00000420727"/>
<dbReference type="PeptideAtlas" id="Q2M3W8"/>
<dbReference type="ProteomicsDB" id="61384">
    <molecule id="Q2M3W8-1"/>
</dbReference>
<dbReference type="ProteomicsDB" id="61385">
    <molecule id="Q2M3W8-2"/>
</dbReference>
<dbReference type="ProteomicsDB" id="61386">
    <molecule id="Q2M3W8-3"/>
</dbReference>
<dbReference type="Antibodypedia" id="29203">
    <property type="antibodies" value="66 antibodies from 13 providers"/>
</dbReference>
<dbReference type="DNASU" id="339318"/>
<dbReference type="Ensembl" id="ENST00000459757.6">
    <molecule id="Q2M3W8-3"/>
    <property type="protein sequence ID" value="ENSP00000419435.1"/>
    <property type="gene ID" value="ENSG00000197841.15"/>
</dbReference>
<dbReference type="Ensembl" id="ENST00000492450.3">
    <molecule id="Q2M3W8-1"/>
    <property type="protein sequence ID" value="ENSP00000420727.1"/>
    <property type="gene ID" value="ENSG00000197841.15"/>
</dbReference>
<dbReference type="GeneID" id="339318"/>
<dbReference type="KEGG" id="hsa:339318"/>
<dbReference type="MANE-Select" id="ENST00000492450.3">
    <property type="protein sequence ID" value="ENSP00000420727.1"/>
    <property type="RefSeq nucleotide sequence ID" value="NM_001029997.4"/>
    <property type="RefSeq protein sequence ID" value="NP_001025168.2"/>
</dbReference>
<dbReference type="UCSC" id="uc002nvu.4">
    <molecule id="Q2M3W8-1"/>
    <property type="organism name" value="human"/>
</dbReference>
<dbReference type="AGR" id="HGNC:12971"/>
<dbReference type="CTD" id="339318"/>
<dbReference type="GeneCards" id="ZNF181"/>
<dbReference type="HGNC" id="HGNC:12971">
    <property type="gene designation" value="ZNF181"/>
</dbReference>
<dbReference type="HPA" id="ENSG00000197841">
    <property type="expression patterns" value="Low tissue specificity"/>
</dbReference>
<dbReference type="MIM" id="606741">
    <property type="type" value="gene"/>
</dbReference>
<dbReference type="neXtProt" id="NX_Q2M3W8"/>
<dbReference type="OpenTargets" id="ENSG00000197841"/>
<dbReference type="PharmGKB" id="PA37553"/>
<dbReference type="VEuPathDB" id="HostDB:ENSG00000197841"/>
<dbReference type="eggNOG" id="KOG1721">
    <property type="taxonomic scope" value="Eukaryota"/>
</dbReference>
<dbReference type="GeneTree" id="ENSGT00940000161431"/>
<dbReference type="HOGENOM" id="CLU_002678_44_5_1"/>
<dbReference type="InParanoid" id="Q2M3W8"/>
<dbReference type="OMA" id="KEDICDE"/>
<dbReference type="OrthoDB" id="427030at2759"/>
<dbReference type="PAN-GO" id="Q2M3W8">
    <property type="GO annotations" value="4 GO annotations based on evolutionary models"/>
</dbReference>
<dbReference type="PhylomeDB" id="Q2M3W8"/>
<dbReference type="TreeFam" id="TF341817"/>
<dbReference type="PathwayCommons" id="Q2M3W8"/>
<dbReference type="SignaLink" id="Q2M3W8"/>
<dbReference type="BioGRID-ORCS" id="339318">
    <property type="hits" value="23 hits in 1175 CRISPR screens"/>
</dbReference>
<dbReference type="ChiTaRS" id="ZNF181">
    <property type="organism name" value="human"/>
</dbReference>
<dbReference type="GenomeRNAi" id="339318"/>
<dbReference type="Pharos" id="Q2M3W8">
    <property type="development level" value="Tdark"/>
</dbReference>
<dbReference type="PRO" id="PR:Q2M3W8"/>
<dbReference type="Proteomes" id="UP000005640">
    <property type="component" value="Chromosome 19"/>
</dbReference>
<dbReference type="RNAct" id="Q2M3W8">
    <property type="molecule type" value="protein"/>
</dbReference>
<dbReference type="Bgee" id="ENSG00000197841">
    <property type="expression patterns" value="Expressed in calcaneal tendon and 100 other cell types or tissues"/>
</dbReference>
<dbReference type="ExpressionAtlas" id="Q2M3W8">
    <property type="expression patterns" value="baseline and differential"/>
</dbReference>
<dbReference type="GO" id="GO:0005634">
    <property type="term" value="C:nucleus"/>
    <property type="evidence" value="ECO:0000318"/>
    <property type="project" value="GO_Central"/>
</dbReference>
<dbReference type="GO" id="GO:0000981">
    <property type="term" value="F:DNA-binding transcription factor activity, RNA polymerase II-specific"/>
    <property type="evidence" value="ECO:0000318"/>
    <property type="project" value="GO_Central"/>
</dbReference>
<dbReference type="GO" id="GO:0000978">
    <property type="term" value="F:RNA polymerase II cis-regulatory region sequence-specific DNA binding"/>
    <property type="evidence" value="ECO:0000318"/>
    <property type="project" value="GO_Central"/>
</dbReference>
<dbReference type="GO" id="GO:0008270">
    <property type="term" value="F:zinc ion binding"/>
    <property type="evidence" value="ECO:0007669"/>
    <property type="project" value="UniProtKB-KW"/>
</dbReference>
<dbReference type="GO" id="GO:0006357">
    <property type="term" value="P:regulation of transcription by RNA polymerase II"/>
    <property type="evidence" value="ECO:0000318"/>
    <property type="project" value="GO_Central"/>
</dbReference>
<dbReference type="CDD" id="cd07765">
    <property type="entry name" value="KRAB_A-box"/>
    <property type="match status" value="1"/>
</dbReference>
<dbReference type="FunFam" id="3.30.160.60:FF:002264">
    <property type="entry name" value="Uncharacterized protein"/>
    <property type="match status" value="1"/>
</dbReference>
<dbReference type="FunFam" id="3.30.160.60:FF:000996">
    <property type="entry name" value="Zinc finger protein 181"/>
    <property type="match status" value="1"/>
</dbReference>
<dbReference type="FunFam" id="3.30.160.60:FF:000144">
    <property type="entry name" value="zinc finger protein 181 isoform X1"/>
    <property type="match status" value="2"/>
</dbReference>
<dbReference type="FunFam" id="3.30.160.60:FF:000745">
    <property type="entry name" value="zinc finger protein 181 isoform X1"/>
    <property type="match status" value="1"/>
</dbReference>
<dbReference type="FunFam" id="3.30.160.60:FF:001129">
    <property type="entry name" value="zinc finger protein 181 isoform X1"/>
    <property type="match status" value="1"/>
</dbReference>
<dbReference type="FunFam" id="3.30.160.60:FF:002049">
    <property type="entry name" value="Zinc finger protein 181 isoform X2"/>
    <property type="match status" value="1"/>
</dbReference>
<dbReference type="FunFam" id="3.30.160.60:FF:000800">
    <property type="entry name" value="zinc finger protein 181 isoform X2"/>
    <property type="match status" value="1"/>
</dbReference>
<dbReference type="FunFam" id="3.30.160.60:FF:001292">
    <property type="entry name" value="zinc finger protein 181 isoform X2"/>
    <property type="match status" value="1"/>
</dbReference>
<dbReference type="FunFam" id="3.30.160.60:FF:000295">
    <property type="entry name" value="zinc finger protein 19"/>
    <property type="match status" value="1"/>
</dbReference>
<dbReference type="FunFam" id="3.30.160.60:FF:000635">
    <property type="entry name" value="zinc finger protein 250 isoform X2"/>
    <property type="match status" value="1"/>
</dbReference>
<dbReference type="Gene3D" id="6.10.140.140">
    <property type="match status" value="1"/>
</dbReference>
<dbReference type="Gene3D" id="3.30.160.60">
    <property type="entry name" value="Classic Zinc Finger"/>
    <property type="match status" value="11"/>
</dbReference>
<dbReference type="InterPro" id="IPR050636">
    <property type="entry name" value="C2H2-ZF_domain-containing"/>
</dbReference>
<dbReference type="InterPro" id="IPR001909">
    <property type="entry name" value="KRAB"/>
</dbReference>
<dbReference type="InterPro" id="IPR036051">
    <property type="entry name" value="KRAB_dom_sf"/>
</dbReference>
<dbReference type="InterPro" id="IPR036236">
    <property type="entry name" value="Znf_C2H2_sf"/>
</dbReference>
<dbReference type="InterPro" id="IPR013087">
    <property type="entry name" value="Znf_C2H2_type"/>
</dbReference>
<dbReference type="PANTHER" id="PTHR47772:SF15">
    <property type="entry name" value="REDUCED EXPRESSION 2-RELATED"/>
    <property type="match status" value="1"/>
</dbReference>
<dbReference type="PANTHER" id="PTHR47772">
    <property type="entry name" value="ZINC FINGER PROTEIN 200"/>
    <property type="match status" value="1"/>
</dbReference>
<dbReference type="Pfam" id="PF01352">
    <property type="entry name" value="KRAB"/>
    <property type="match status" value="1"/>
</dbReference>
<dbReference type="Pfam" id="PF00096">
    <property type="entry name" value="zf-C2H2"/>
    <property type="match status" value="10"/>
</dbReference>
<dbReference type="Pfam" id="PF13912">
    <property type="entry name" value="zf-C2H2_6"/>
    <property type="match status" value="1"/>
</dbReference>
<dbReference type="SMART" id="SM00349">
    <property type="entry name" value="KRAB"/>
    <property type="match status" value="1"/>
</dbReference>
<dbReference type="SMART" id="SM00614">
    <property type="entry name" value="ZnF_BED"/>
    <property type="match status" value="3"/>
</dbReference>
<dbReference type="SMART" id="SM00355">
    <property type="entry name" value="ZnF_C2H2"/>
    <property type="match status" value="11"/>
</dbReference>
<dbReference type="SUPFAM" id="SSF57667">
    <property type="entry name" value="beta-beta-alpha zinc fingers"/>
    <property type="match status" value="6"/>
</dbReference>
<dbReference type="SUPFAM" id="SSF109640">
    <property type="entry name" value="KRAB domain (Kruppel-associated box)"/>
    <property type="match status" value="1"/>
</dbReference>
<dbReference type="PROSITE" id="PS50805">
    <property type="entry name" value="KRAB"/>
    <property type="match status" value="1"/>
</dbReference>
<dbReference type="PROSITE" id="PS00028">
    <property type="entry name" value="ZINC_FINGER_C2H2_1"/>
    <property type="match status" value="11"/>
</dbReference>
<dbReference type="PROSITE" id="PS50157">
    <property type="entry name" value="ZINC_FINGER_C2H2_2"/>
    <property type="match status" value="11"/>
</dbReference>
<sequence length="571" mass="65842">MPQVTFNDVAIDFTHEEWGWLSSAQRDLYKDVMVQNYENLVSVAGLSVTKPYVITLLEDGKEPWMMEKKLSKGMIPDWESRWENKELSTKKDNYDEDSPQTVIIEKVVKQSYEFSNSKKNLEYIEKLEGKHGSQVDHFRPAILTSRESPTADSVYKYNIFRSTFHSKSTLSEPQKISAEGNSHKYDILKKNLPKKSVIKNEKVNGGKKLLNSNKSGAAFSQGKSLTLPQTCNREKIYTCSECGKAFGKQSILNRHWRIHTGEKPYECRECGKTFSHGSSLTRHLISHSGEKPYKCIECGKAFSHVSSLTNHQSTHTGEKPYECMNCGKSFSRVSHLIEHLRIHTQEKLYECRICGKAFIHRSSLIHHQKIHTGEKPYECRECGKAFCCSSHLTRHQRIHTMEKQYECNKCLKVFSSLSFLVQHQSIHTEEKPFECQKCRKSFNQLESLNMHLRNHIRLKPYECSICGKAFSHRSSLLQHHRIHTGEKPYECIKCGKTFSCSSNLTVHQRIHTGEKPYKCNECGKAFSKGSNLTAHQRVHNGEKPNSVVSVEKPLDYMNHYTCEKSYRRETV</sequence>
<comment type="function">
    <text>May be involved in transcriptional regulation.</text>
</comment>
<comment type="subcellular location">
    <subcellularLocation>
        <location evidence="4">Nucleus</location>
    </subcellularLocation>
</comment>
<comment type="alternative products">
    <event type="alternative splicing"/>
    <isoform>
        <id>Q2M3W8-1</id>
        <name>1</name>
        <sequence type="displayed"/>
    </isoform>
    <isoform>
        <id>Q2M3W8-2</id>
        <name>2</name>
        <sequence type="described" ref="VSP_017824"/>
    </isoform>
    <isoform>
        <id>Q2M3W8-3</id>
        <name>3</name>
        <sequence type="described" ref="VSP_043416"/>
    </isoform>
</comment>
<comment type="similarity">
    <text evidence="4">Belongs to the krueppel C2H2-type zinc-finger protein family.</text>
</comment>
<keyword id="KW-0025">Alternative splicing</keyword>
<keyword id="KW-0238">DNA-binding</keyword>
<keyword id="KW-1017">Isopeptide bond</keyword>
<keyword id="KW-0479">Metal-binding</keyword>
<keyword id="KW-0539">Nucleus</keyword>
<keyword id="KW-1267">Proteomics identification</keyword>
<keyword id="KW-1185">Reference proteome</keyword>
<keyword id="KW-0677">Repeat</keyword>
<keyword id="KW-0804">Transcription</keyword>
<keyword id="KW-0805">Transcription regulation</keyword>
<keyword id="KW-0832">Ubl conjugation</keyword>
<keyword id="KW-0862">Zinc</keyword>
<keyword id="KW-0863">Zinc-finger</keyword>
<protein>
    <recommendedName>
        <fullName>Zinc finger protein 181</fullName>
    </recommendedName>
    <alternativeName>
        <fullName>HHZ181</fullName>
    </alternativeName>
</protein>
<feature type="chain" id="PRO_0000230666" description="Zinc finger protein 181">
    <location>
        <begin position="1"/>
        <end position="571"/>
    </location>
</feature>
<feature type="domain" description="KRAB" evidence="2">
    <location>
        <begin position="4"/>
        <end position="76"/>
    </location>
</feature>
<feature type="zinc finger region" description="C2H2-type 1" evidence="1">
    <location>
        <begin position="237"/>
        <end position="259"/>
    </location>
</feature>
<feature type="zinc finger region" description="C2H2-type 2" evidence="1">
    <location>
        <begin position="265"/>
        <end position="287"/>
    </location>
</feature>
<feature type="zinc finger region" description="C2H2-type 3" evidence="1">
    <location>
        <begin position="293"/>
        <end position="315"/>
    </location>
</feature>
<feature type="zinc finger region" description="C2H2-type 4" evidence="1">
    <location>
        <begin position="321"/>
        <end position="343"/>
    </location>
</feature>
<feature type="zinc finger region" description="C2H2-type 5" evidence="1">
    <location>
        <begin position="349"/>
        <end position="371"/>
    </location>
</feature>
<feature type="zinc finger region" description="C2H2-type 6" evidence="1">
    <location>
        <begin position="377"/>
        <end position="399"/>
    </location>
</feature>
<feature type="zinc finger region" description="C2H2-type 7" evidence="1">
    <location>
        <begin position="405"/>
        <end position="427"/>
    </location>
</feature>
<feature type="zinc finger region" description="C2H2-type 8" evidence="1">
    <location>
        <begin position="433"/>
        <end position="455"/>
    </location>
</feature>
<feature type="zinc finger region" description="C2H2-type 9" evidence="1">
    <location>
        <begin position="461"/>
        <end position="483"/>
    </location>
</feature>
<feature type="zinc finger region" description="C2H2-type 10" evidence="1">
    <location>
        <begin position="489"/>
        <end position="511"/>
    </location>
</feature>
<feature type="zinc finger region" description="C2H2-type 11" evidence="1">
    <location>
        <begin position="517"/>
        <end position="539"/>
    </location>
</feature>
<feature type="cross-link" description="Glycyl lysine isopeptide (Lys-Gly) (interchain with G-Cter in SUMO2)" evidence="5">
    <location>
        <position position="109"/>
    </location>
</feature>
<feature type="cross-link" description="Glycyl lysine isopeptide (Lys-Gly) (interchain with G-Cter in SUMO2)" evidence="6">
    <location>
        <position position="126"/>
    </location>
</feature>
<feature type="splice variant" id="VSP_017824" description="In isoform 2." evidence="3">
    <location>
        <begin position="1"/>
        <end position="64"/>
    </location>
</feature>
<feature type="splice variant" id="VSP_043416" description="In isoform 3." evidence="3">
    <location>
        <position position="44"/>
    </location>
</feature>
<gene>
    <name type="primary">ZNF181</name>
</gene>